<gene>
    <name evidence="1" type="primary">tilS</name>
    <name type="ordered locus">Ent638_0726</name>
</gene>
<feature type="chain" id="PRO_1000164319" description="tRNA(Ile)-lysidine synthase">
    <location>
        <begin position="1"/>
        <end position="426"/>
    </location>
</feature>
<feature type="binding site" evidence="1">
    <location>
        <begin position="21"/>
        <end position="26"/>
    </location>
    <ligand>
        <name>ATP</name>
        <dbReference type="ChEBI" id="CHEBI:30616"/>
    </ligand>
</feature>
<comment type="function">
    <text evidence="1">Ligates lysine onto the cytidine present at position 34 of the AUA codon-specific tRNA(Ile) that contains the anticodon CAU, in an ATP-dependent manner. Cytidine is converted to lysidine, thus changing the amino acid specificity of the tRNA from methionine to isoleucine.</text>
</comment>
<comment type="catalytic activity">
    <reaction evidence="1">
        <text>cytidine(34) in tRNA(Ile2) + L-lysine + ATP = lysidine(34) in tRNA(Ile2) + AMP + diphosphate + H(+)</text>
        <dbReference type="Rhea" id="RHEA:43744"/>
        <dbReference type="Rhea" id="RHEA-COMP:10625"/>
        <dbReference type="Rhea" id="RHEA-COMP:10670"/>
        <dbReference type="ChEBI" id="CHEBI:15378"/>
        <dbReference type="ChEBI" id="CHEBI:30616"/>
        <dbReference type="ChEBI" id="CHEBI:32551"/>
        <dbReference type="ChEBI" id="CHEBI:33019"/>
        <dbReference type="ChEBI" id="CHEBI:82748"/>
        <dbReference type="ChEBI" id="CHEBI:83665"/>
        <dbReference type="ChEBI" id="CHEBI:456215"/>
        <dbReference type="EC" id="6.3.4.19"/>
    </reaction>
</comment>
<comment type="subcellular location">
    <subcellularLocation>
        <location evidence="1">Cytoplasm</location>
    </subcellularLocation>
</comment>
<comment type="domain">
    <text>The N-terminal region contains the highly conserved SGGXDS motif, predicted to be a P-loop motif involved in ATP binding.</text>
</comment>
<comment type="similarity">
    <text evidence="1">Belongs to the tRNA(Ile)-lysidine synthase family.</text>
</comment>
<keyword id="KW-0067">ATP-binding</keyword>
<keyword id="KW-0963">Cytoplasm</keyword>
<keyword id="KW-0436">Ligase</keyword>
<keyword id="KW-0547">Nucleotide-binding</keyword>
<keyword id="KW-0819">tRNA processing</keyword>
<protein>
    <recommendedName>
        <fullName evidence="1">tRNA(Ile)-lysidine synthase</fullName>
        <ecNumber evidence="1">6.3.4.19</ecNumber>
    </recommendedName>
    <alternativeName>
        <fullName evidence="1">tRNA(Ile)-2-lysyl-cytidine synthase</fullName>
    </alternativeName>
    <alternativeName>
        <fullName evidence="1">tRNA(Ile)-lysidine synthetase</fullName>
    </alternativeName>
</protein>
<reference key="1">
    <citation type="journal article" date="2010" name="PLoS Genet.">
        <title>Genome sequence of the plant growth promoting endophytic bacterium Enterobacter sp. 638.</title>
        <authorList>
            <person name="Taghavi S."/>
            <person name="van der Lelie D."/>
            <person name="Hoffman A."/>
            <person name="Zhang Y.B."/>
            <person name="Walla M.D."/>
            <person name="Vangronsveld J."/>
            <person name="Newman L."/>
            <person name="Monchy S."/>
        </authorList>
    </citation>
    <scope>NUCLEOTIDE SEQUENCE [LARGE SCALE GENOMIC DNA]</scope>
    <source>
        <strain>638</strain>
    </source>
</reference>
<dbReference type="EC" id="6.3.4.19" evidence="1"/>
<dbReference type="EMBL" id="CP000653">
    <property type="protein sequence ID" value="ABP59413.1"/>
    <property type="molecule type" value="Genomic_DNA"/>
</dbReference>
<dbReference type="RefSeq" id="WP_012016134.1">
    <property type="nucleotide sequence ID" value="NC_009436.1"/>
</dbReference>
<dbReference type="SMR" id="A4W6T3"/>
<dbReference type="STRING" id="399742.Ent638_0726"/>
<dbReference type="KEGG" id="ent:Ent638_0726"/>
<dbReference type="eggNOG" id="COG0037">
    <property type="taxonomic scope" value="Bacteria"/>
</dbReference>
<dbReference type="HOGENOM" id="CLU_018869_2_0_6"/>
<dbReference type="OrthoDB" id="9807403at2"/>
<dbReference type="Proteomes" id="UP000000230">
    <property type="component" value="Chromosome"/>
</dbReference>
<dbReference type="GO" id="GO:0005737">
    <property type="term" value="C:cytoplasm"/>
    <property type="evidence" value="ECO:0007669"/>
    <property type="project" value="UniProtKB-SubCell"/>
</dbReference>
<dbReference type="GO" id="GO:0005524">
    <property type="term" value="F:ATP binding"/>
    <property type="evidence" value="ECO:0007669"/>
    <property type="project" value="UniProtKB-UniRule"/>
</dbReference>
<dbReference type="GO" id="GO:0032267">
    <property type="term" value="F:tRNA(Ile)-lysidine synthase activity"/>
    <property type="evidence" value="ECO:0007669"/>
    <property type="project" value="UniProtKB-EC"/>
</dbReference>
<dbReference type="GO" id="GO:0006400">
    <property type="term" value="P:tRNA modification"/>
    <property type="evidence" value="ECO:0007669"/>
    <property type="project" value="UniProtKB-UniRule"/>
</dbReference>
<dbReference type="CDD" id="cd01992">
    <property type="entry name" value="TilS_N"/>
    <property type="match status" value="1"/>
</dbReference>
<dbReference type="FunFam" id="3.40.50.620:FF:000173">
    <property type="entry name" value="tRNA(Ile)-lysidine synthase"/>
    <property type="match status" value="1"/>
</dbReference>
<dbReference type="Gene3D" id="1.20.59.20">
    <property type="match status" value="1"/>
</dbReference>
<dbReference type="Gene3D" id="3.40.50.620">
    <property type="entry name" value="HUPs"/>
    <property type="match status" value="1"/>
</dbReference>
<dbReference type="HAMAP" id="MF_01161">
    <property type="entry name" value="tRNA_Ile_lys_synt"/>
    <property type="match status" value="1"/>
</dbReference>
<dbReference type="InterPro" id="IPR012796">
    <property type="entry name" value="Lysidine-tRNA-synth_C"/>
</dbReference>
<dbReference type="InterPro" id="IPR014729">
    <property type="entry name" value="Rossmann-like_a/b/a_fold"/>
</dbReference>
<dbReference type="InterPro" id="IPR011063">
    <property type="entry name" value="TilS/TtcA_N"/>
</dbReference>
<dbReference type="InterPro" id="IPR012094">
    <property type="entry name" value="tRNA_Ile_lys_synt"/>
</dbReference>
<dbReference type="InterPro" id="IPR012795">
    <property type="entry name" value="tRNA_Ile_lys_synt_N"/>
</dbReference>
<dbReference type="InterPro" id="IPR015262">
    <property type="entry name" value="tRNA_Ile_lys_synt_subst-bd"/>
</dbReference>
<dbReference type="NCBIfam" id="TIGR02433">
    <property type="entry name" value="lysidine_TilS_C"/>
    <property type="match status" value="1"/>
</dbReference>
<dbReference type="NCBIfam" id="TIGR02432">
    <property type="entry name" value="lysidine_TilS_N"/>
    <property type="match status" value="1"/>
</dbReference>
<dbReference type="NCBIfam" id="NF007942">
    <property type="entry name" value="PRK10660.1"/>
    <property type="match status" value="1"/>
</dbReference>
<dbReference type="PANTHER" id="PTHR43033">
    <property type="entry name" value="TRNA(ILE)-LYSIDINE SYNTHASE-RELATED"/>
    <property type="match status" value="1"/>
</dbReference>
<dbReference type="PANTHER" id="PTHR43033:SF1">
    <property type="entry name" value="TRNA(ILE)-LYSIDINE SYNTHASE-RELATED"/>
    <property type="match status" value="1"/>
</dbReference>
<dbReference type="Pfam" id="PF01171">
    <property type="entry name" value="ATP_bind_3"/>
    <property type="match status" value="1"/>
</dbReference>
<dbReference type="Pfam" id="PF09179">
    <property type="entry name" value="TilS"/>
    <property type="match status" value="1"/>
</dbReference>
<dbReference type="Pfam" id="PF11734">
    <property type="entry name" value="TilS_C"/>
    <property type="match status" value="1"/>
</dbReference>
<dbReference type="SMART" id="SM00977">
    <property type="entry name" value="TilS_C"/>
    <property type="match status" value="1"/>
</dbReference>
<dbReference type="SUPFAM" id="SSF52402">
    <property type="entry name" value="Adenine nucleotide alpha hydrolases-like"/>
    <property type="match status" value="1"/>
</dbReference>
<dbReference type="SUPFAM" id="SSF82829">
    <property type="entry name" value="MesJ substrate recognition domain-like"/>
    <property type="match status" value="1"/>
</dbReference>
<dbReference type="SUPFAM" id="SSF56037">
    <property type="entry name" value="PheT/TilS domain"/>
    <property type="match status" value="1"/>
</dbReference>
<evidence type="ECO:0000255" key="1">
    <source>
        <dbReference type="HAMAP-Rule" id="MF_01161"/>
    </source>
</evidence>
<accession>A4W6T3</accession>
<name>TILS_ENT38</name>
<sequence length="426" mass="48584">MTSSVIAQSVFPYRQLLVGFSGGLDSTVLLHRLMLWREQEPDVQIRAIHVHHGLSSNADHWVAHCESLCKSWHIPLIVERVKLRDEGLGTEAQARKARYLAFEKTLQAGEALVTAQHLDDQCETFLLALKRGSGPAGLSAMPVRTEFAGSQLIRPLLGETRTSLEKWAQDYNLCWIDDESNQDDRYDRNFLRLRVLPLLSERWPHFADATARSAALCAEQESLLDELLTEELASVISTEGRLRIEPLEAMSPVRRAALIRRWLAAHHAQMPSRTMLNRIWEEVALAREDATPRLHLGGFEVRRYKGELWWVKYQPTMIDQIIEWRDPSVTLMLPQGSVCFADGGHIRLPNPDEQVTIRFKACGILHIVGRHGGRKLKKIWQEYNIPPWLRDTTPLLFYGETLIAAAGVFVTKEGWIEKGVQLEWKA</sequence>
<proteinExistence type="inferred from homology"/>
<organism>
    <name type="scientific">Enterobacter sp. (strain 638)</name>
    <dbReference type="NCBI Taxonomy" id="399742"/>
    <lineage>
        <taxon>Bacteria</taxon>
        <taxon>Pseudomonadati</taxon>
        <taxon>Pseudomonadota</taxon>
        <taxon>Gammaproteobacteria</taxon>
        <taxon>Enterobacterales</taxon>
        <taxon>Enterobacteriaceae</taxon>
        <taxon>Enterobacter</taxon>
    </lineage>
</organism>